<gene>
    <name type="primary">Fam177a1</name>
</gene>
<comment type="similarity">
    <text evidence="4">Belongs to the FAM177 family.</text>
</comment>
<comment type="sequence caution" evidence="4">
    <conflict type="erroneous initiation">
        <sequence resource="EMBL-CDS" id="BAB24712"/>
    </conflict>
</comment>
<feature type="chain" id="PRO_0000089886" description="Protein FAM177A1">
    <location>
        <begin position="1"/>
        <end position="207"/>
    </location>
</feature>
<feature type="region of interest" description="Disordered" evidence="3">
    <location>
        <begin position="142"/>
        <end position="176"/>
    </location>
</feature>
<feature type="coiled-coil region" evidence="2">
    <location>
        <begin position="131"/>
        <end position="170"/>
    </location>
</feature>
<feature type="compositionally biased region" description="Polar residues" evidence="3">
    <location>
        <begin position="157"/>
        <end position="176"/>
    </location>
</feature>
<feature type="modified residue" description="N-acetylmethionine" evidence="1">
    <location>
        <position position="1"/>
    </location>
</feature>
<feature type="modified residue" description="Phosphoserine" evidence="5">
    <location>
        <position position="65"/>
    </location>
</feature>
<feature type="modified residue" description="Phosphothreonine" evidence="5">
    <location>
        <position position="66"/>
    </location>
</feature>
<reference key="1">
    <citation type="journal article" date="2005" name="Science">
        <title>The transcriptional landscape of the mammalian genome.</title>
        <authorList>
            <person name="Carninci P."/>
            <person name="Kasukawa T."/>
            <person name="Katayama S."/>
            <person name="Gough J."/>
            <person name="Frith M.C."/>
            <person name="Maeda N."/>
            <person name="Oyama R."/>
            <person name="Ravasi T."/>
            <person name="Lenhard B."/>
            <person name="Wells C."/>
            <person name="Kodzius R."/>
            <person name="Shimokawa K."/>
            <person name="Bajic V.B."/>
            <person name="Brenner S.E."/>
            <person name="Batalov S."/>
            <person name="Forrest A.R."/>
            <person name="Zavolan M."/>
            <person name="Davis M.J."/>
            <person name="Wilming L.G."/>
            <person name="Aidinis V."/>
            <person name="Allen J.E."/>
            <person name="Ambesi-Impiombato A."/>
            <person name="Apweiler R."/>
            <person name="Aturaliya R.N."/>
            <person name="Bailey T.L."/>
            <person name="Bansal M."/>
            <person name="Baxter L."/>
            <person name="Beisel K.W."/>
            <person name="Bersano T."/>
            <person name="Bono H."/>
            <person name="Chalk A.M."/>
            <person name="Chiu K.P."/>
            <person name="Choudhary V."/>
            <person name="Christoffels A."/>
            <person name="Clutterbuck D.R."/>
            <person name="Crowe M.L."/>
            <person name="Dalla E."/>
            <person name="Dalrymple B.P."/>
            <person name="de Bono B."/>
            <person name="Della Gatta G."/>
            <person name="di Bernardo D."/>
            <person name="Down T."/>
            <person name="Engstrom P."/>
            <person name="Fagiolini M."/>
            <person name="Faulkner G."/>
            <person name="Fletcher C.F."/>
            <person name="Fukushima T."/>
            <person name="Furuno M."/>
            <person name="Futaki S."/>
            <person name="Gariboldi M."/>
            <person name="Georgii-Hemming P."/>
            <person name="Gingeras T.R."/>
            <person name="Gojobori T."/>
            <person name="Green R.E."/>
            <person name="Gustincich S."/>
            <person name="Harbers M."/>
            <person name="Hayashi Y."/>
            <person name="Hensch T.K."/>
            <person name="Hirokawa N."/>
            <person name="Hill D."/>
            <person name="Huminiecki L."/>
            <person name="Iacono M."/>
            <person name="Ikeo K."/>
            <person name="Iwama A."/>
            <person name="Ishikawa T."/>
            <person name="Jakt M."/>
            <person name="Kanapin A."/>
            <person name="Katoh M."/>
            <person name="Kawasawa Y."/>
            <person name="Kelso J."/>
            <person name="Kitamura H."/>
            <person name="Kitano H."/>
            <person name="Kollias G."/>
            <person name="Krishnan S.P."/>
            <person name="Kruger A."/>
            <person name="Kummerfeld S.K."/>
            <person name="Kurochkin I.V."/>
            <person name="Lareau L.F."/>
            <person name="Lazarevic D."/>
            <person name="Lipovich L."/>
            <person name="Liu J."/>
            <person name="Liuni S."/>
            <person name="McWilliam S."/>
            <person name="Madan Babu M."/>
            <person name="Madera M."/>
            <person name="Marchionni L."/>
            <person name="Matsuda H."/>
            <person name="Matsuzawa S."/>
            <person name="Miki H."/>
            <person name="Mignone F."/>
            <person name="Miyake S."/>
            <person name="Morris K."/>
            <person name="Mottagui-Tabar S."/>
            <person name="Mulder N."/>
            <person name="Nakano N."/>
            <person name="Nakauchi H."/>
            <person name="Ng P."/>
            <person name="Nilsson R."/>
            <person name="Nishiguchi S."/>
            <person name="Nishikawa S."/>
            <person name="Nori F."/>
            <person name="Ohara O."/>
            <person name="Okazaki Y."/>
            <person name="Orlando V."/>
            <person name="Pang K.C."/>
            <person name="Pavan W.J."/>
            <person name="Pavesi G."/>
            <person name="Pesole G."/>
            <person name="Petrovsky N."/>
            <person name="Piazza S."/>
            <person name="Reed J."/>
            <person name="Reid J.F."/>
            <person name="Ring B.Z."/>
            <person name="Ringwald M."/>
            <person name="Rost B."/>
            <person name="Ruan Y."/>
            <person name="Salzberg S.L."/>
            <person name="Sandelin A."/>
            <person name="Schneider C."/>
            <person name="Schoenbach C."/>
            <person name="Sekiguchi K."/>
            <person name="Semple C.A."/>
            <person name="Seno S."/>
            <person name="Sessa L."/>
            <person name="Sheng Y."/>
            <person name="Shibata Y."/>
            <person name="Shimada H."/>
            <person name="Shimada K."/>
            <person name="Silva D."/>
            <person name="Sinclair B."/>
            <person name="Sperling S."/>
            <person name="Stupka E."/>
            <person name="Sugiura K."/>
            <person name="Sultana R."/>
            <person name="Takenaka Y."/>
            <person name="Taki K."/>
            <person name="Tammoja K."/>
            <person name="Tan S.L."/>
            <person name="Tang S."/>
            <person name="Taylor M.S."/>
            <person name="Tegner J."/>
            <person name="Teichmann S.A."/>
            <person name="Ueda H.R."/>
            <person name="van Nimwegen E."/>
            <person name="Verardo R."/>
            <person name="Wei C.L."/>
            <person name="Yagi K."/>
            <person name="Yamanishi H."/>
            <person name="Zabarovsky E."/>
            <person name="Zhu S."/>
            <person name="Zimmer A."/>
            <person name="Hide W."/>
            <person name="Bult C."/>
            <person name="Grimmond S.M."/>
            <person name="Teasdale R.D."/>
            <person name="Liu E.T."/>
            <person name="Brusic V."/>
            <person name="Quackenbush J."/>
            <person name="Wahlestedt C."/>
            <person name="Mattick J.S."/>
            <person name="Hume D.A."/>
            <person name="Kai C."/>
            <person name="Sasaki D."/>
            <person name="Tomaru Y."/>
            <person name="Fukuda S."/>
            <person name="Kanamori-Katayama M."/>
            <person name="Suzuki M."/>
            <person name="Aoki J."/>
            <person name="Arakawa T."/>
            <person name="Iida J."/>
            <person name="Imamura K."/>
            <person name="Itoh M."/>
            <person name="Kato T."/>
            <person name="Kawaji H."/>
            <person name="Kawagashira N."/>
            <person name="Kawashima T."/>
            <person name="Kojima M."/>
            <person name="Kondo S."/>
            <person name="Konno H."/>
            <person name="Nakano K."/>
            <person name="Ninomiya N."/>
            <person name="Nishio T."/>
            <person name="Okada M."/>
            <person name="Plessy C."/>
            <person name="Shibata K."/>
            <person name="Shiraki T."/>
            <person name="Suzuki S."/>
            <person name="Tagami M."/>
            <person name="Waki K."/>
            <person name="Watahiki A."/>
            <person name="Okamura-Oho Y."/>
            <person name="Suzuki H."/>
            <person name="Kawai J."/>
            <person name="Hayashizaki Y."/>
        </authorList>
    </citation>
    <scope>NUCLEOTIDE SEQUENCE [LARGE SCALE MRNA]</scope>
    <source>
        <strain>C57BL/6J</strain>
        <tissue>Brain</tissue>
        <tissue>Testis</tissue>
    </source>
</reference>
<reference key="2">
    <citation type="journal article" date="2004" name="Genome Res.">
        <title>The status, quality, and expansion of the NIH full-length cDNA project: the Mammalian Gene Collection (MGC).</title>
        <authorList>
            <consortium name="The MGC Project Team"/>
        </authorList>
    </citation>
    <scope>NUCLEOTIDE SEQUENCE [LARGE SCALE MRNA]</scope>
    <source>
        <strain>C57BL/6J</strain>
        <tissue>Brain</tissue>
    </source>
</reference>
<reference key="3">
    <citation type="journal article" date="2010" name="Cell">
        <title>A tissue-specific atlas of mouse protein phosphorylation and expression.</title>
        <authorList>
            <person name="Huttlin E.L."/>
            <person name="Jedrychowski M.P."/>
            <person name="Elias J.E."/>
            <person name="Goswami T."/>
            <person name="Rad R."/>
            <person name="Beausoleil S.A."/>
            <person name="Villen J."/>
            <person name="Haas W."/>
            <person name="Sowa M.E."/>
            <person name="Gygi S.P."/>
        </authorList>
    </citation>
    <scope>PHOSPHORYLATION [LARGE SCALE ANALYSIS] AT SER-65 AND THR-66</scope>
    <scope>IDENTIFICATION BY MASS SPECTROMETRY [LARGE SCALE ANALYSIS]</scope>
    <source>
        <tissue>Brain</tissue>
        <tissue>Brown adipose tissue</tissue>
        <tissue>Heart</tissue>
        <tissue>Kidney</tissue>
        <tissue>Lung</tissue>
        <tissue>Spleen</tissue>
        <tissue>Testis</tissue>
    </source>
</reference>
<accession>Q8BR63</accession>
<accession>Q9D9M7</accession>
<dbReference type="EMBL" id="AK006713">
    <property type="protein sequence ID" value="BAB24712.1"/>
    <property type="status" value="ALT_INIT"/>
    <property type="molecule type" value="mRNA"/>
</dbReference>
<dbReference type="EMBL" id="AK045530">
    <property type="protein sequence ID" value="BAC32408.1"/>
    <property type="molecule type" value="mRNA"/>
</dbReference>
<dbReference type="EMBL" id="BC048158">
    <property type="protein sequence ID" value="AAH48158.1"/>
    <property type="molecule type" value="mRNA"/>
</dbReference>
<dbReference type="EMBL" id="BC049669">
    <property type="protein sequence ID" value="AAH49669.1"/>
    <property type="molecule type" value="mRNA"/>
</dbReference>
<dbReference type="CCDS" id="CCDS25913.1"/>
<dbReference type="SMR" id="Q8BR63"/>
<dbReference type="BioGRID" id="215974">
    <property type="interactions" value="3"/>
</dbReference>
<dbReference type="FunCoup" id="Q8BR63">
    <property type="interactions" value="39"/>
</dbReference>
<dbReference type="STRING" id="10090.ENSMUSP00000137299"/>
<dbReference type="iPTMnet" id="Q8BR63"/>
<dbReference type="PhosphoSitePlus" id="Q8BR63"/>
<dbReference type="SwissPalm" id="Q8BR63"/>
<dbReference type="jPOST" id="Q8BR63"/>
<dbReference type="PaxDb" id="10090-ENSMUSP00000137299"/>
<dbReference type="PeptideAtlas" id="Q8BR63"/>
<dbReference type="ProteomicsDB" id="275975"/>
<dbReference type="Pumba" id="Q8BR63"/>
<dbReference type="DNASU" id="73385"/>
<dbReference type="Ensembl" id="ENSMUST00000177768.3">
    <property type="protein sequence ID" value="ENSMUSP00000137299.2"/>
    <property type="gene ID" value="ENSMUSG00000095595.3"/>
</dbReference>
<dbReference type="Ensembl" id="ENSMUST00000177978.3">
    <property type="protein sequence ID" value="ENSMUSP00000137377.2"/>
    <property type="gene ID" value="ENSMUSG00000094103.3"/>
</dbReference>
<dbReference type="GeneID" id="73385"/>
<dbReference type="KEGG" id="mmu:100101807"/>
<dbReference type="KEGG" id="mmu:73385"/>
<dbReference type="UCSC" id="uc007nog.1">
    <property type="organism name" value="mouse"/>
</dbReference>
<dbReference type="AGR" id="MGI:1920635"/>
<dbReference type="AGR" id="MGI:3714351"/>
<dbReference type="CTD" id="100101807"/>
<dbReference type="CTD" id="73385"/>
<dbReference type="MGI" id="MGI:1920635">
    <property type="gene designation" value="1700047I17Rik1"/>
</dbReference>
<dbReference type="VEuPathDB" id="HostDB:ENSMUSG00000094103"/>
<dbReference type="VEuPathDB" id="HostDB:ENSMUSG00000095595"/>
<dbReference type="eggNOG" id="ENOG502RYW3">
    <property type="taxonomic scope" value="Eukaryota"/>
</dbReference>
<dbReference type="GeneTree" id="ENSGT00390000016736"/>
<dbReference type="HOGENOM" id="CLU_081605_0_0_1"/>
<dbReference type="InParanoid" id="Q8BR63"/>
<dbReference type="OMA" id="TACAMDQ"/>
<dbReference type="OrthoDB" id="45963at2759"/>
<dbReference type="PhylomeDB" id="Q8BR63"/>
<dbReference type="TreeFam" id="TF326916"/>
<dbReference type="BioGRID-ORCS" id="100101807">
    <property type="hits" value="6 hits in 38 CRISPR screens"/>
</dbReference>
<dbReference type="BioGRID-ORCS" id="73385">
    <property type="hits" value="2 hits in 37 CRISPR screens"/>
</dbReference>
<dbReference type="PRO" id="PR:Q8BR63"/>
<dbReference type="Proteomes" id="UP000000589">
    <property type="component" value="Chromosome 12"/>
</dbReference>
<dbReference type="RNAct" id="Q8BR63">
    <property type="molecule type" value="protein"/>
</dbReference>
<dbReference type="Bgee" id="ENSMUSG00000094103">
    <property type="expression patterns" value="Expressed in animal zygote and 54 other cell types or tissues"/>
</dbReference>
<dbReference type="InterPro" id="IPR028260">
    <property type="entry name" value="FAM177"/>
</dbReference>
<dbReference type="PANTHER" id="PTHR31206">
    <property type="entry name" value="LP10445P"/>
    <property type="match status" value="1"/>
</dbReference>
<dbReference type="PANTHER" id="PTHR31206:SF5">
    <property type="entry name" value="PROTEIN FAM177A1"/>
    <property type="match status" value="1"/>
</dbReference>
<dbReference type="Pfam" id="PF14774">
    <property type="entry name" value="FAM177"/>
    <property type="match status" value="1"/>
</dbReference>
<organism>
    <name type="scientific">Mus musculus</name>
    <name type="common">Mouse</name>
    <dbReference type="NCBI Taxonomy" id="10090"/>
    <lineage>
        <taxon>Eukaryota</taxon>
        <taxon>Metazoa</taxon>
        <taxon>Chordata</taxon>
        <taxon>Craniata</taxon>
        <taxon>Vertebrata</taxon>
        <taxon>Euteleostomi</taxon>
        <taxon>Mammalia</taxon>
        <taxon>Eutheria</taxon>
        <taxon>Euarchontoglires</taxon>
        <taxon>Glires</taxon>
        <taxon>Rodentia</taxon>
        <taxon>Myomorpha</taxon>
        <taxon>Muroidea</taxon>
        <taxon>Muridae</taxon>
        <taxon>Murinae</taxon>
        <taxon>Mus</taxon>
        <taxon>Mus</taxon>
    </lineage>
</organism>
<evidence type="ECO:0000250" key="1">
    <source>
        <dbReference type="UniProtKB" id="Q8N128"/>
    </source>
</evidence>
<evidence type="ECO:0000255" key="2"/>
<evidence type="ECO:0000256" key="3">
    <source>
        <dbReference type="SAM" id="MobiDB-lite"/>
    </source>
</evidence>
<evidence type="ECO:0000305" key="4"/>
<evidence type="ECO:0007744" key="5">
    <source>
    </source>
</evidence>
<keyword id="KW-0007">Acetylation</keyword>
<keyword id="KW-0175">Coiled coil</keyword>
<keyword id="KW-0597">Phosphoprotein</keyword>
<keyword id="KW-1185">Reference proteome</keyword>
<proteinExistence type="evidence at protein level"/>
<name>F177A_MOUSE</name>
<sequence length="207" mass="23578">MERESGCAAAGETEAAAATAFRDATRQISNERGFENVELGVMGKKKKVPRRVIHFVSGETMEEYSTDEDEVDGLDKKDVLPTVDPTKLTWGPYLWFYMLRAATSTLSVCDFLGEKIASVLGISTPKYQYAIDEYYRMKKEEEEEEEENRMSEEAERQYQQNKLQADSIVQTDQPETVSSSFVNINFEMEEDCEAIKENKQRPVSVPP</sequence>
<protein>
    <recommendedName>
        <fullName>Protein FAM177A1</fullName>
    </recommendedName>
</protein>